<comment type="catalytic activity">
    <reaction evidence="1">
        <text>tRNA(Gly) + glycine + ATP = glycyl-tRNA(Gly) + AMP + diphosphate</text>
        <dbReference type="Rhea" id="RHEA:16013"/>
        <dbReference type="Rhea" id="RHEA-COMP:9664"/>
        <dbReference type="Rhea" id="RHEA-COMP:9683"/>
        <dbReference type="ChEBI" id="CHEBI:30616"/>
        <dbReference type="ChEBI" id="CHEBI:33019"/>
        <dbReference type="ChEBI" id="CHEBI:57305"/>
        <dbReference type="ChEBI" id="CHEBI:78442"/>
        <dbReference type="ChEBI" id="CHEBI:78522"/>
        <dbReference type="ChEBI" id="CHEBI:456215"/>
        <dbReference type="EC" id="6.1.1.14"/>
    </reaction>
</comment>
<comment type="subunit">
    <text evidence="1">Tetramer of two alpha and two beta subunits.</text>
</comment>
<comment type="subcellular location">
    <subcellularLocation>
        <location evidence="1">Cytoplasm</location>
    </subcellularLocation>
</comment>
<comment type="similarity">
    <text evidence="1">Belongs to the class-II aminoacyl-tRNA synthetase family.</text>
</comment>
<organism>
    <name type="scientific">Alteromonas mediterranea (strain DSM 17117 / CIP 110805 / LMG 28347 / Deep ecotype)</name>
    <dbReference type="NCBI Taxonomy" id="1774373"/>
    <lineage>
        <taxon>Bacteria</taxon>
        <taxon>Pseudomonadati</taxon>
        <taxon>Pseudomonadota</taxon>
        <taxon>Gammaproteobacteria</taxon>
        <taxon>Alteromonadales</taxon>
        <taxon>Alteromonadaceae</taxon>
        <taxon>Alteromonas/Salinimonas group</taxon>
        <taxon>Alteromonas</taxon>
    </lineage>
</organism>
<gene>
    <name evidence="1" type="primary">glyS</name>
    <name type="ordered locus">MADE_1000035</name>
</gene>
<protein>
    <recommendedName>
        <fullName evidence="1">Glycine--tRNA ligase beta subunit</fullName>
        <ecNumber evidence="1">6.1.1.14</ecNumber>
    </recommendedName>
    <alternativeName>
        <fullName evidence="1">Glycyl-tRNA synthetase beta subunit</fullName>
        <shortName evidence="1">GlyRS</shortName>
    </alternativeName>
</protein>
<accession>B4S277</accession>
<accession>F2G1Q9</accession>
<reference key="1">
    <citation type="journal article" date="2008" name="ISME J.">
        <title>Comparative genomics of two ecotypes of the marine planktonic copiotroph Alteromonas macleodii suggests alternative lifestyles associated with different kinds of particulate organic matter.</title>
        <authorList>
            <person name="Ivars-Martinez E."/>
            <person name="Martin-Cuadrado A.-B."/>
            <person name="D'Auria G."/>
            <person name="Mira A."/>
            <person name="Ferriera S."/>
            <person name="Johnson J."/>
            <person name="Friedman R."/>
            <person name="Rodriguez-Valera F."/>
        </authorList>
    </citation>
    <scope>NUCLEOTIDE SEQUENCE [LARGE SCALE GENOMIC DNA]</scope>
    <source>
        <strain>DSM 17117 / CIP 110805 / LMG 28347 / Deep ecotype</strain>
    </source>
</reference>
<keyword id="KW-0030">Aminoacyl-tRNA synthetase</keyword>
<keyword id="KW-0067">ATP-binding</keyword>
<keyword id="KW-0963">Cytoplasm</keyword>
<keyword id="KW-0436">Ligase</keyword>
<keyword id="KW-0547">Nucleotide-binding</keyword>
<keyword id="KW-0648">Protein biosynthesis</keyword>
<name>SYGB_ALTMD</name>
<feature type="chain" id="PRO_1000101263" description="Glycine--tRNA ligase beta subunit">
    <location>
        <begin position="1"/>
        <end position="692"/>
    </location>
</feature>
<sequence length="692" mass="75714">MRTENCLVELGTEELPPKALKSLGEAFATQFEAALSQADLSFDSVSWFAAPRRLAVYVSGLAEGQADKVVEKRGPAVSAAFDADGNPTKAAQGWARGNGIDVADAERLVTDKGEWLLHKAHVPGQSVAELLEGLINQAVSKLPIPKPMRWGNYNTQFIRPVHTLCVLYGSEVVNVSVLGLTSGRVVQGHRFHGEGRFELDHADNYASALEQQYVLADFEARKDKVRQQLEDAAKNLSLKPDYDEELLEEIASLVEWPVVLQAGFDKGFLEVPKEALIYTMKDDQKYVPLLDSDGALSNTFLFVTNIESHDASQVISGNEKVIRPRLADAEFFFNSDKKTTLESRLESLETVLFQKQLGTLKEKSERISALSAFIASQIDANETQAARAGLLAKTDLMSNMVMEFPDVQGVMGKYYALNDGEDAPVAEALYEQYMPRFAGDALPSSGVSASVALADKLDTLVGIFGIGQLPKGDKDPFALRRAAIGVLRIVTELSLPLDLETLVSKAIDVYGNKLTNAETQTQVVDFVLGRFNALLQDQAIAIDVIQAVAARRPTKPSDYLARVHAVDKFKALEEAEALAAANKRVANILAKQNVEVTATVNIDESLLAEDAEKALYVELKAAQKEVEIAVPSQDYTRILTTLATLRNVIDNFFDNVMVMADDEAVKHNRLALLSLLRQLFLTTADISILAKS</sequence>
<evidence type="ECO:0000255" key="1">
    <source>
        <dbReference type="HAMAP-Rule" id="MF_00255"/>
    </source>
</evidence>
<dbReference type="EC" id="6.1.1.14" evidence="1"/>
<dbReference type="EMBL" id="CP001103">
    <property type="protein sequence ID" value="AEA96156.1"/>
    <property type="molecule type" value="Genomic_DNA"/>
</dbReference>
<dbReference type="RefSeq" id="WP_012516530.1">
    <property type="nucleotide sequence ID" value="NC_011138.3"/>
</dbReference>
<dbReference type="SMR" id="B4S277"/>
<dbReference type="KEGG" id="amc:MADE_1000035"/>
<dbReference type="PATRIC" id="fig|314275.5.peg.9"/>
<dbReference type="HOGENOM" id="CLU_007220_2_2_6"/>
<dbReference type="Proteomes" id="UP000001870">
    <property type="component" value="Chromosome"/>
</dbReference>
<dbReference type="GO" id="GO:0005829">
    <property type="term" value="C:cytosol"/>
    <property type="evidence" value="ECO:0007669"/>
    <property type="project" value="TreeGrafter"/>
</dbReference>
<dbReference type="GO" id="GO:0004814">
    <property type="term" value="F:arginine-tRNA ligase activity"/>
    <property type="evidence" value="ECO:0007669"/>
    <property type="project" value="InterPro"/>
</dbReference>
<dbReference type="GO" id="GO:0005524">
    <property type="term" value="F:ATP binding"/>
    <property type="evidence" value="ECO:0007669"/>
    <property type="project" value="UniProtKB-UniRule"/>
</dbReference>
<dbReference type="GO" id="GO:0004820">
    <property type="term" value="F:glycine-tRNA ligase activity"/>
    <property type="evidence" value="ECO:0007669"/>
    <property type="project" value="UniProtKB-UniRule"/>
</dbReference>
<dbReference type="GO" id="GO:0006420">
    <property type="term" value="P:arginyl-tRNA aminoacylation"/>
    <property type="evidence" value="ECO:0007669"/>
    <property type="project" value="InterPro"/>
</dbReference>
<dbReference type="GO" id="GO:0006426">
    <property type="term" value="P:glycyl-tRNA aminoacylation"/>
    <property type="evidence" value="ECO:0007669"/>
    <property type="project" value="UniProtKB-UniRule"/>
</dbReference>
<dbReference type="Gene3D" id="1.10.730.10">
    <property type="entry name" value="Isoleucyl-tRNA Synthetase, Domain 1"/>
    <property type="match status" value="1"/>
</dbReference>
<dbReference type="HAMAP" id="MF_00255">
    <property type="entry name" value="Gly_tRNA_synth_beta"/>
    <property type="match status" value="1"/>
</dbReference>
<dbReference type="InterPro" id="IPR008909">
    <property type="entry name" value="DALR_anticod-bd"/>
</dbReference>
<dbReference type="InterPro" id="IPR015944">
    <property type="entry name" value="Gly-tRNA-synth_bsu"/>
</dbReference>
<dbReference type="InterPro" id="IPR006194">
    <property type="entry name" value="Gly-tRNA-synth_heterodimer"/>
</dbReference>
<dbReference type="InterPro" id="IPR009080">
    <property type="entry name" value="tRNAsynth_Ia_anticodon-bd"/>
</dbReference>
<dbReference type="NCBIfam" id="TIGR00211">
    <property type="entry name" value="glyS"/>
    <property type="match status" value="1"/>
</dbReference>
<dbReference type="PANTHER" id="PTHR30075:SF2">
    <property type="entry name" value="GLYCINE--TRNA LIGASE, CHLOROPLASTIC_MITOCHONDRIAL 2"/>
    <property type="match status" value="1"/>
</dbReference>
<dbReference type="PANTHER" id="PTHR30075">
    <property type="entry name" value="GLYCYL-TRNA SYNTHETASE"/>
    <property type="match status" value="1"/>
</dbReference>
<dbReference type="Pfam" id="PF05746">
    <property type="entry name" value="DALR_1"/>
    <property type="match status" value="1"/>
</dbReference>
<dbReference type="Pfam" id="PF02092">
    <property type="entry name" value="tRNA_synt_2f"/>
    <property type="match status" value="1"/>
</dbReference>
<dbReference type="PRINTS" id="PR01045">
    <property type="entry name" value="TRNASYNTHGB"/>
</dbReference>
<dbReference type="SMART" id="SM00836">
    <property type="entry name" value="DALR_1"/>
    <property type="match status" value="1"/>
</dbReference>
<dbReference type="SUPFAM" id="SSF47323">
    <property type="entry name" value="Anticodon-binding domain of a subclass of class I aminoacyl-tRNA synthetases"/>
    <property type="match status" value="1"/>
</dbReference>
<dbReference type="SUPFAM" id="SSF109604">
    <property type="entry name" value="HD-domain/PDEase-like"/>
    <property type="match status" value="1"/>
</dbReference>
<dbReference type="PROSITE" id="PS50861">
    <property type="entry name" value="AA_TRNA_LIGASE_II_GLYAB"/>
    <property type="match status" value="1"/>
</dbReference>
<proteinExistence type="inferred from homology"/>